<protein>
    <recommendedName>
        <fullName evidence="1">Holliday junction branch migration complex subunit RuvA</fullName>
    </recommendedName>
</protein>
<proteinExistence type="inferred from homology"/>
<accession>Q97GT0</accession>
<organism>
    <name type="scientific">Clostridium acetobutylicum (strain ATCC 824 / DSM 792 / JCM 1419 / IAM 19013 / LMG 5710 / NBRC 13948 / NRRL B-527 / VKM B-1787 / 2291 / W)</name>
    <dbReference type="NCBI Taxonomy" id="272562"/>
    <lineage>
        <taxon>Bacteria</taxon>
        <taxon>Bacillati</taxon>
        <taxon>Bacillota</taxon>
        <taxon>Clostridia</taxon>
        <taxon>Eubacteriales</taxon>
        <taxon>Clostridiaceae</taxon>
        <taxon>Clostridium</taxon>
    </lineage>
</organism>
<name>RUVA_CLOAB</name>
<gene>
    <name evidence="1" type="primary">ruvA</name>
    <name type="ordered locus">CA_C2285</name>
</gene>
<reference key="1">
    <citation type="journal article" date="2001" name="J. Bacteriol.">
        <title>Genome sequence and comparative analysis of the solvent-producing bacterium Clostridium acetobutylicum.</title>
        <authorList>
            <person name="Noelling J."/>
            <person name="Breton G."/>
            <person name="Omelchenko M.V."/>
            <person name="Makarova K.S."/>
            <person name="Zeng Q."/>
            <person name="Gibson R."/>
            <person name="Lee H.M."/>
            <person name="Dubois J."/>
            <person name="Qiu D."/>
            <person name="Hitti J."/>
            <person name="Wolf Y.I."/>
            <person name="Tatusov R.L."/>
            <person name="Sabathe F."/>
            <person name="Doucette-Stamm L.A."/>
            <person name="Soucaille P."/>
            <person name="Daly M.J."/>
            <person name="Bennett G.N."/>
            <person name="Koonin E.V."/>
            <person name="Smith D.R."/>
        </authorList>
    </citation>
    <scope>NUCLEOTIDE SEQUENCE [LARGE SCALE GENOMIC DNA]</scope>
    <source>
        <strain>ATCC 824 / DSM 792 / JCM 1419 / IAM 19013 / LMG 5710 / NBRC 13948 / NRRL B-527 / VKM B-1787 / 2291 / W</strain>
    </source>
</reference>
<comment type="function">
    <text evidence="1">The RuvA-RuvB-RuvC complex processes Holliday junction (HJ) DNA during genetic recombination and DNA repair, while the RuvA-RuvB complex plays an important role in the rescue of blocked DNA replication forks via replication fork reversal (RFR). RuvA specifically binds to HJ cruciform DNA, conferring on it an open structure. The RuvB hexamer acts as an ATP-dependent pump, pulling dsDNA into and through the RuvAB complex. HJ branch migration allows RuvC to scan DNA until it finds its consensus sequence, where it cleaves and resolves the cruciform DNA.</text>
</comment>
<comment type="subunit">
    <text evidence="1">Homotetramer. Forms an RuvA(8)-RuvB(12)-Holliday junction (HJ) complex. HJ DNA is sandwiched between 2 RuvA tetramers; dsDNA enters through RuvA and exits via RuvB. An RuvB hexamer assembles on each DNA strand where it exits the tetramer. Each RuvB hexamer is contacted by two RuvA subunits (via domain III) on 2 adjacent RuvB subunits; this complex drives branch migration. In the full resolvosome a probable DNA-RuvA(4)-RuvB(12)-RuvC(2) complex forms which resolves the HJ.</text>
</comment>
<comment type="subcellular location">
    <subcellularLocation>
        <location evidence="1">Cytoplasm</location>
    </subcellularLocation>
</comment>
<comment type="domain">
    <text evidence="1">Has three domains with a flexible linker between the domains II and III and assumes an 'L' shape. Domain III is highly mobile and contacts RuvB.</text>
</comment>
<comment type="similarity">
    <text evidence="1">Belongs to the RuvA family.</text>
</comment>
<sequence>MYEYIKGKYIGINKDYIIVDNNGVGYKIFTSGNTMANMPKPEEDVLIYLTQIVRQDFIGLYGFLTKDELEMFNKLLTINGVGAKASLSLLSICTVNNLKYAIITGDEKTIVKAPGIGKKTAQRIILELKDKFKSTDISKGNSEINNLDVDYDEHSKKLEEVRFALNSLGYSEKETDRAINNVDKSEGIENIIKSCLRFLMN</sequence>
<evidence type="ECO:0000255" key="1">
    <source>
        <dbReference type="HAMAP-Rule" id="MF_00031"/>
    </source>
</evidence>
<keyword id="KW-0963">Cytoplasm</keyword>
<keyword id="KW-0227">DNA damage</keyword>
<keyword id="KW-0233">DNA recombination</keyword>
<keyword id="KW-0234">DNA repair</keyword>
<keyword id="KW-0238">DNA-binding</keyword>
<keyword id="KW-1185">Reference proteome</keyword>
<dbReference type="EMBL" id="AE001437">
    <property type="protein sequence ID" value="AAK80242.1"/>
    <property type="molecule type" value="Genomic_DNA"/>
</dbReference>
<dbReference type="PIR" id="G97181">
    <property type="entry name" value="G97181"/>
</dbReference>
<dbReference type="RefSeq" id="NP_348902.1">
    <property type="nucleotide sequence ID" value="NC_003030.1"/>
</dbReference>
<dbReference type="RefSeq" id="WP_010965583.1">
    <property type="nucleotide sequence ID" value="NC_003030.1"/>
</dbReference>
<dbReference type="SMR" id="Q97GT0"/>
<dbReference type="STRING" id="272562.CA_C2285"/>
<dbReference type="GeneID" id="44998763"/>
<dbReference type="KEGG" id="cac:CA_C2285"/>
<dbReference type="PATRIC" id="fig|272562.8.peg.2484"/>
<dbReference type="eggNOG" id="COG0632">
    <property type="taxonomic scope" value="Bacteria"/>
</dbReference>
<dbReference type="HOGENOM" id="CLU_087936_3_0_9"/>
<dbReference type="OrthoDB" id="5293449at2"/>
<dbReference type="Proteomes" id="UP000000814">
    <property type="component" value="Chromosome"/>
</dbReference>
<dbReference type="GO" id="GO:0005737">
    <property type="term" value="C:cytoplasm"/>
    <property type="evidence" value="ECO:0007669"/>
    <property type="project" value="UniProtKB-SubCell"/>
</dbReference>
<dbReference type="GO" id="GO:0009379">
    <property type="term" value="C:Holliday junction helicase complex"/>
    <property type="evidence" value="ECO:0007669"/>
    <property type="project" value="InterPro"/>
</dbReference>
<dbReference type="GO" id="GO:0048476">
    <property type="term" value="C:Holliday junction resolvase complex"/>
    <property type="evidence" value="ECO:0007669"/>
    <property type="project" value="UniProtKB-UniRule"/>
</dbReference>
<dbReference type="GO" id="GO:0005524">
    <property type="term" value="F:ATP binding"/>
    <property type="evidence" value="ECO:0007669"/>
    <property type="project" value="InterPro"/>
</dbReference>
<dbReference type="GO" id="GO:0000400">
    <property type="term" value="F:four-way junction DNA binding"/>
    <property type="evidence" value="ECO:0007669"/>
    <property type="project" value="UniProtKB-UniRule"/>
</dbReference>
<dbReference type="GO" id="GO:0009378">
    <property type="term" value="F:four-way junction helicase activity"/>
    <property type="evidence" value="ECO:0007669"/>
    <property type="project" value="InterPro"/>
</dbReference>
<dbReference type="GO" id="GO:0006310">
    <property type="term" value="P:DNA recombination"/>
    <property type="evidence" value="ECO:0007669"/>
    <property type="project" value="UniProtKB-UniRule"/>
</dbReference>
<dbReference type="GO" id="GO:0006281">
    <property type="term" value="P:DNA repair"/>
    <property type="evidence" value="ECO:0007669"/>
    <property type="project" value="UniProtKB-UniRule"/>
</dbReference>
<dbReference type="CDD" id="cd14332">
    <property type="entry name" value="UBA_RuvA_C"/>
    <property type="match status" value="1"/>
</dbReference>
<dbReference type="Gene3D" id="1.10.150.20">
    <property type="entry name" value="5' to 3' exonuclease, C-terminal subdomain"/>
    <property type="match status" value="1"/>
</dbReference>
<dbReference type="Gene3D" id="2.40.50.140">
    <property type="entry name" value="Nucleic acid-binding proteins"/>
    <property type="match status" value="1"/>
</dbReference>
<dbReference type="HAMAP" id="MF_00031">
    <property type="entry name" value="DNA_HJ_migration_RuvA"/>
    <property type="match status" value="1"/>
</dbReference>
<dbReference type="InterPro" id="IPR013849">
    <property type="entry name" value="DNA_helicase_Holl-junc_RuvA_I"/>
</dbReference>
<dbReference type="InterPro" id="IPR012340">
    <property type="entry name" value="NA-bd_OB-fold"/>
</dbReference>
<dbReference type="InterPro" id="IPR000085">
    <property type="entry name" value="RuvA"/>
</dbReference>
<dbReference type="InterPro" id="IPR010994">
    <property type="entry name" value="RuvA_2-like"/>
</dbReference>
<dbReference type="InterPro" id="IPR011114">
    <property type="entry name" value="RuvA_C"/>
</dbReference>
<dbReference type="InterPro" id="IPR036267">
    <property type="entry name" value="RuvA_C_sf"/>
</dbReference>
<dbReference type="NCBIfam" id="TIGR00084">
    <property type="entry name" value="ruvA"/>
    <property type="match status" value="1"/>
</dbReference>
<dbReference type="Pfam" id="PF14520">
    <property type="entry name" value="HHH_5"/>
    <property type="match status" value="1"/>
</dbReference>
<dbReference type="Pfam" id="PF07499">
    <property type="entry name" value="RuvA_C"/>
    <property type="match status" value="1"/>
</dbReference>
<dbReference type="Pfam" id="PF01330">
    <property type="entry name" value="RuvA_N"/>
    <property type="match status" value="1"/>
</dbReference>
<dbReference type="SUPFAM" id="SSF46929">
    <property type="entry name" value="DNA helicase RuvA subunit, C-terminal domain"/>
    <property type="match status" value="1"/>
</dbReference>
<dbReference type="SUPFAM" id="SSF50249">
    <property type="entry name" value="Nucleic acid-binding proteins"/>
    <property type="match status" value="1"/>
</dbReference>
<dbReference type="SUPFAM" id="SSF47781">
    <property type="entry name" value="RuvA domain 2-like"/>
    <property type="match status" value="1"/>
</dbReference>
<feature type="chain" id="PRO_0000094621" description="Holliday junction branch migration complex subunit RuvA">
    <location>
        <begin position="1"/>
        <end position="201"/>
    </location>
</feature>
<feature type="region of interest" description="Domain I" evidence="1">
    <location>
        <begin position="1"/>
        <end position="64"/>
    </location>
</feature>
<feature type="region of interest" description="Domain II" evidence="1">
    <location>
        <begin position="65"/>
        <end position="143"/>
    </location>
</feature>
<feature type="region of interest" description="Flexible linker" evidence="1">
    <location>
        <begin position="144"/>
        <end position="154"/>
    </location>
</feature>
<feature type="region of interest" description="Domain III" evidence="1">
    <location>
        <begin position="154"/>
        <end position="201"/>
    </location>
</feature>